<feature type="chain" id="PRO_0000121562" description="DNA-binding protein PF1087">
    <location>
        <begin position="1"/>
        <end position="112"/>
    </location>
</feature>
<protein>
    <recommendedName>
        <fullName evidence="1">DNA-binding protein PF1087</fullName>
    </recommendedName>
</protein>
<gene>
    <name type="ordered locus">PF1087</name>
</gene>
<keyword id="KW-0238">DNA-binding</keyword>
<keyword id="KW-1185">Reference proteome</keyword>
<proteinExistence type="inferred from homology"/>
<dbReference type="EMBL" id="AE009950">
    <property type="protein sequence ID" value="AAL81211.1"/>
    <property type="molecule type" value="Genomic_DNA"/>
</dbReference>
<dbReference type="RefSeq" id="WP_011012225.1">
    <property type="nucleotide sequence ID" value="NZ_CP023154.1"/>
</dbReference>
<dbReference type="SMR" id="Q8U1W7"/>
<dbReference type="STRING" id="186497.PF1087"/>
<dbReference type="PaxDb" id="186497-PF1087"/>
<dbReference type="KEGG" id="pfu:PF1087"/>
<dbReference type="PATRIC" id="fig|186497.12.peg.1147"/>
<dbReference type="eggNOG" id="arCOG04179">
    <property type="taxonomic scope" value="Archaea"/>
</dbReference>
<dbReference type="HOGENOM" id="CLU_122978_3_0_2"/>
<dbReference type="OrthoDB" id="7912at2157"/>
<dbReference type="PhylomeDB" id="Q8U1W7"/>
<dbReference type="Proteomes" id="UP000001013">
    <property type="component" value="Chromosome"/>
</dbReference>
<dbReference type="GO" id="GO:0005829">
    <property type="term" value="C:cytosol"/>
    <property type="evidence" value="ECO:0007669"/>
    <property type="project" value="TreeGrafter"/>
</dbReference>
<dbReference type="GO" id="GO:0003677">
    <property type="term" value="F:DNA binding"/>
    <property type="evidence" value="ECO:0007669"/>
    <property type="project" value="UniProtKB-UniRule"/>
</dbReference>
<dbReference type="Gene3D" id="1.10.8.140">
    <property type="entry name" value="PDCD5-like"/>
    <property type="match status" value="1"/>
</dbReference>
<dbReference type="HAMAP" id="MF_00026">
    <property type="entry name" value="dsDNA_bind"/>
    <property type="match status" value="1"/>
</dbReference>
<dbReference type="InterPro" id="IPR022889">
    <property type="entry name" value="DNA_bind_arc"/>
</dbReference>
<dbReference type="InterPro" id="IPR002836">
    <property type="entry name" value="PDCD5-like"/>
</dbReference>
<dbReference type="InterPro" id="IPR036883">
    <property type="entry name" value="PDCD5-like_sf"/>
</dbReference>
<dbReference type="NCBIfam" id="NF003268">
    <property type="entry name" value="PRK04239.1"/>
    <property type="match status" value="1"/>
</dbReference>
<dbReference type="PANTHER" id="PTHR10840">
    <property type="entry name" value="PROGRAMMED CELL DEATH PROTEIN 5"/>
    <property type="match status" value="1"/>
</dbReference>
<dbReference type="PANTHER" id="PTHR10840:SF0">
    <property type="entry name" value="PROGRAMMED CELL DEATH PROTEIN 5"/>
    <property type="match status" value="1"/>
</dbReference>
<dbReference type="Pfam" id="PF01984">
    <property type="entry name" value="dsDNA_bind"/>
    <property type="match status" value="1"/>
</dbReference>
<dbReference type="PIRSF" id="PIRSF015730">
    <property type="entry name" value="TFAR19"/>
    <property type="match status" value="1"/>
</dbReference>
<dbReference type="SUPFAM" id="SSF46950">
    <property type="entry name" value="Double-stranded DNA-binding domain"/>
    <property type="match status" value="1"/>
</dbReference>
<evidence type="ECO:0000255" key="1">
    <source>
        <dbReference type="HAMAP-Rule" id="MF_00026"/>
    </source>
</evidence>
<sequence length="112" mass="13449">MAEDIEEIRRRKLMELQKKYLEQQKAQEEAERQQALIEAQIQAILRRILTPEARERLARVKLVKPELARQVELILVQLYQAGQITEKIDDAKMKKILAQIEARTRREFRIKW</sequence>
<name>Y1087_PYRFU</name>
<comment type="similarity">
    <text evidence="1">Belongs to the PDCD5 family.</text>
</comment>
<reference key="1">
    <citation type="journal article" date="1999" name="Genetics">
        <title>Divergence of the hyperthermophilic archaea Pyrococcus furiosus and P. horikoshii inferred from complete genomic sequences.</title>
        <authorList>
            <person name="Maeder D.L."/>
            <person name="Weiss R.B."/>
            <person name="Dunn D.M."/>
            <person name="Cherry J.L."/>
            <person name="Gonzalez J.M."/>
            <person name="DiRuggiero J."/>
            <person name="Robb F.T."/>
        </authorList>
    </citation>
    <scope>NUCLEOTIDE SEQUENCE [LARGE SCALE GENOMIC DNA]</scope>
    <source>
        <strain>ATCC 43587 / DSM 3638 / JCM 8422 / Vc1</strain>
    </source>
</reference>
<organism>
    <name type="scientific">Pyrococcus furiosus (strain ATCC 43587 / DSM 3638 / JCM 8422 / Vc1)</name>
    <dbReference type="NCBI Taxonomy" id="186497"/>
    <lineage>
        <taxon>Archaea</taxon>
        <taxon>Methanobacteriati</taxon>
        <taxon>Methanobacteriota</taxon>
        <taxon>Thermococci</taxon>
        <taxon>Thermococcales</taxon>
        <taxon>Thermococcaceae</taxon>
        <taxon>Pyrococcus</taxon>
    </lineage>
</organism>
<accession>Q8U1W7</accession>